<dbReference type="EC" id="2.7.4.25" evidence="1"/>
<dbReference type="EMBL" id="CP000140">
    <property type="protein sequence ID" value="ABR45426.1"/>
    <property type="molecule type" value="Genomic_DNA"/>
</dbReference>
<dbReference type="RefSeq" id="WP_005858908.1">
    <property type="nucleotide sequence ID" value="NC_009615.1"/>
</dbReference>
<dbReference type="SMR" id="A6LIB2"/>
<dbReference type="STRING" id="435591.BDI_3739"/>
<dbReference type="PaxDb" id="435591-BDI_3739"/>
<dbReference type="KEGG" id="pdi:BDI_3739"/>
<dbReference type="eggNOG" id="COG0283">
    <property type="taxonomic scope" value="Bacteria"/>
</dbReference>
<dbReference type="HOGENOM" id="CLU_079959_0_2_10"/>
<dbReference type="BioCyc" id="PDIS435591:G1G5A-3834-MONOMER"/>
<dbReference type="Proteomes" id="UP000000566">
    <property type="component" value="Chromosome"/>
</dbReference>
<dbReference type="GO" id="GO:0005829">
    <property type="term" value="C:cytosol"/>
    <property type="evidence" value="ECO:0007669"/>
    <property type="project" value="TreeGrafter"/>
</dbReference>
<dbReference type="GO" id="GO:0005524">
    <property type="term" value="F:ATP binding"/>
    <property type="evidence" value="ECO:0007669"/>
    <property type="project" value="UniProtKB-UniRule"/>
</dbReference>
<dbReference type="GO" id="GO:0036430">
    <property type="term" value="F:CMP kinase activity"/>
    <property type="evidence" value="ECO:0007669"/>
    <property type="project" value="RHEA"/>
</dbReference>
<dbReference type="GO" id="GO:0036431">
    <property type="term" value="F:dCMP kinase activity"/>
    <property type="evidence" value="ECO:0007669"/>
    <property type="project" value="RHEA"/>
</dbReference>
<dbReference type="GO" id="GO:0015949">
    <property type="term" value="P:nucleobase-containing small molecule interconversion"/>
    <property type="evidence" value="ECO:0007669"/>
    <property type="project" value="TreeGrafter"/>
</dbReference>
<dbReference type="GO" id="GO:0006220">
    <property type="term" value="P:pyrimidine nucleotide metabolic process"/>
    <property type="evidence" value="ECO:0007669"/>
    <property type="project" value="UniProtKB-UniRule"/>
</dbReference>
<dbReference type="CDD" id="cd02020">
    <property type="entry name" value="CMPK"/>
    <property type="match status" value="1"/>
</dbReference>
<dbReference type="Gene3D" id="3.40.50.300">
    <property type="entry name" value="P-loop containing nucleotide triphosphate hydrolases"/>
    <property type="match status" value="1"/>
</dbReference>
<dbReference type="HAMAP" id="MF_00238">
    <property type="entry name" value="Cytidyl_kinase_type1"/>
    <property type="match status" value="1"/>
</dbReference>
<dbReference type="InterPro" id="IPR003136">
    <property type="entry name" value="Cytidylate_kin"/>
</dbReference>
<dbReference type="InterPro" id="IPR011994">
    <property type="entry name" value="Cytidylate_kinase_dom"/>
</dbReference>
<dbReference type="InterPro" id="IPR027417">
    <property type="entry name" value="P-loop_NTPase"/>
</dbReference>
<dbReference type="NCBIfam" id="TIGR00017">
    <property type="entry name" value="cmk"/>
    <property type="match status" value="1"/>
</dbReference>
<dbReference type="PANTHER" id="PTHR21299:SF2">
    <property type="entry name" value="CYTIDYLATE KINASE"/>
    <property type="match status" value="1"/>
</dbReference>
<dbReference type="PANTHER" id="PTHR21299">
    <property type="entry name" value="CYTIDYLATE KINASE/PANTOATE-BETA-ALANINE LIGASE"/>
    <property type="match status" value="1"/>
</dbReference>
<dbReference type="Pfam" id="PF02224">
    <property type="entry name" value="Cytidylate_kin"/>
    <property type="match status" value="1"/>
</dbReference>
<dbReference type="SUPFAM" id="SSF52540">
    <property type="entry name" value="P-loop containing nucleoside triphosphate hydrolases"/>
    <property type="match status" value="1"/>
</dbReference>
<protein>
    <recommendedName>
        <fullName evidence="1">Cytidylate kinase</fullName>
        <shortName evidence="1">CK</shortName>
        <ecNumber evidence="1">2.7.4.25</ecNumber>
    </recommendedName>
    <alternativeName>
        <fullName evidence="1">Cytidine monophosphate kinase</fullName>
        <shortName evidence="1">CMP kinase</shortName>
    </alternativeName>
</protein>
<keyword id="KW-0067">ATP-binding</keyword>
<keyword id="KW-0963">Cytoplasm</keyword>
<keyword id="KW-0418">Kinase</keyword>
<keyword id="KW-0547">Nucleotide-binding</keyword>
<keyword id="KW-1185">Reference proteome</keyword>
<keyword id="KW-0808">Transferase</keyword>
<proteinExistence type="inferred from homology"/>
<sequence>MKKIVIAIDGHSSSGKSTMAKDLAKEIGYTYIDTGAMYRAVTLYCIQHGFFEGEKIKEEELKASIHDIDISFRLNAETGRPDTYLNGVNVEKEIRGMEVADKVSPVATLGFVRRALVAKQQEMGKAKGIVMDGRDIGTVVFPDAELKLFVTASPEVRAKRRVDELEAKGIPASYEEVLENVKKRDYIDSTREESPLRQADDALVLDNSHMTLEEQKAWLLEQYHKAIGS</sequence>
<accession>A6LIB2</accession>
<organism>
    <name type="scientific">Parabacteroides distasonis (strain ATCC 8503 / DSM 20701 / CIP 104284 / JCM 5825 / NCTC 11152)</name>
    <dbReference type="NCBI Taxonomy" id="435591"/>
    <lineage>
        <taxon>Bacteria</taxon>
        <taxon>Pseudomonadati</taxon>
        <taxon>Bacteroidota</taxon>
        <taxon>Bacteroidia</taxon>
        <taxon>Bacteroidales</taxon>
        <taxon>Tannerellaceae</taxon>
        <taxon>Parabacteroides</taxon>
    </lineage>
</organism>
<comment type="catalytic activity">
    <reaction evidence="1">
        <text>CMP + ATP = CDP + ADP</text>
        <dbReference type="Rhea" id="RHEA:11600"/>
        <dbReference type="ChEBI" id="CHEBI:30616"/>
        <dbReference type="ChEBI" id="CHEBI:58069"/>
        <dbReference type="ChEBI" id="CHEBI:60377"/>
        <dbReference type="ChEBI" id="CHEBI:456216"/>
        <dbReference type="EC" id="2.7.4.25"/>
    </reaction>
</comment>
<comment type="catalytic activity">
    <reaction evidence="1">
        <text>dCMP + ATP = dCDP + ADP</text>
        <dbReference type="Rhea" id="RHEA:25094"/>
        <dbReference type="ChEBI" id="CHEBI:30616"/>
        <dbReference type="ChEBI" id="CHEBI:57566"/>
        <dbReference type="ChEBI" id="CHEBI:58593"/>
        <dbReference type="ChEBI" id="CHEBI:456216"/>
        <dbReference type="EC" id="2.7.4.25"/>
    </reaction>
</comment>
<comment type="subcellular location">
    <subcellularLocation>
        <location evidence="1">Cytoplasm</location>
    </subcellularLocation>
</comment>
<comment type="similarity">
    <text evidence="1">Belongs to the cytidylate kinase family. Type 1 subfamily.</text>
</comment>
<gene>
    <name evidence="1" type="primary">cmk</name>
    <name type="ordered locus">BDI_3739</name>
</gene>
<evidence type="ECO:0000255" key="1">
    <source>
        <dbReference type="HAMAP-Rule" id="MF_00238"/>
    </source>
</evidence>
<name>KCY_PARD8</name>
<reference key="1">
    <citation type="journal article" date="2007" name="PLoS Biol.">
        <title>Evolution of symbiotic bacteria in the distal human intestine.</title>
        <authorList>
            <person name="Xu J."/>
            <person name="Mahowald M.A."/>
            <person name="Ley R.E."/>
            <person name="Lozupone C.A."/>
            <person name="Hamady M."/>
            <person name="Martens E.C."/>
            <person name="Henrissat B."/>
            <person name="Coutinho P.M."/>
            <person name="Minx P."/>
            <person name="Latreille P."/>
            <person name="Cordum H."/>
            <person name="Van Brunt A."/>
            <person name="Kim K."/>
            <person name="Fulton R.S."/>
            <person name="Fulton L.A."/>
            <person name="Clifton S.W."/>
            <person name="Wilson R.K."/>
            <person name="Knight R.D."/>
            <person name="Gordon J.I."/>
        </authorList>
    </citation>
    <scope>NUCLEOTIDE SEQUENCE [LARGE SCALE GENOMIC DNA]</scope>
    <source>
        <strain>ATCC 8503 / DSM 20701 / CIP 104284 / JCM 5825 / NCTC 11152</strain>
    </source>
</reference>
<feature type="chain" id="PRO_1000048246" description="Cytidylate kinase">
    <location>
        <begin position="1"/>
        <end position="229"/>
    </location>
</feature>
<feature type="binding site" evidence="1">
    <location>
        <begin position="10"/>
        <end position="18"/>
    </location>
    <ligand>
        <name>ATP</name>
        <dbReference type="ChEBI" id="CHEBI:30616"/>
    </ligand>
</feature>